<reference key="1">
    <citation type="journal article" date="1984" name="Cell">
        <title>Multiple ubiquitin mRNAs during Xenopus laevis development contain tandem repeats of the 76 amino acid coding sequence.</title>
        <authorList>
            <person name="Dworkin-Rastl E."/>
            <person name="Shrutkowski A."/>
            <person name="Dworkin M.B."/>
        </authorList>
    </citation>
    <scope>NUCLEOTIDE SEQUENCE [MRNA]</scope>
</reference>
<dbReference type="EMBL" id="M11512">
    <property type="protein sequence ID" value="AAA49978.1"/>
    <property type="molecule type" value="mRNA"/>
</dbReference>
<dbReference type="PDB" id="2K39">
    <property type="method" value="NMR"/>
    <property type="chains" value="A=92-167"/>
</dbReference>
<dbReference type="PDB" id="2KDE">
    <property type="method" value="NMR"/>
    <property type="chains" value="B/C=92-167"/>
</dbReference>
<dbReference type="PDBsum" id="2K39"/>
<dbReference type="PDBsum" id="2KDE"/>
<dbReference type="SMR" id="P62972"/>
<dbReference type="DIP" id="DIP-40040N"/>
<dbReference type="IntAct" id="P62972">
    <property type="interactions" value="4"/>
</dbReference>
<dbReference type="MINT" id="P62972"/>
<dbReference type="EvolutionaryTrace" id="P62972"/>
<dbReference type="Proteomes" id="UP000186698">
    <property type="component" value="Unplaced"/>
</dbReference>
<dbReference type="GO" id="GO:0005737">
    <property type="term" value="C:cytoplasm"/>
    <property type="evidence" value="ECO:0007669"/>
    <property type="project" value="UniProtKB-SubCell"/>
</dbReference>
<dbReference type="GO" id="GO:0005634">
    <property type="term" value="C:nucleus"/>
    <property type="evidence" value="ECO:0007669"/>
    <property type="project" value="UniProtKB-SubCell"/>
</dbReference>
<dbReference type="CDD" id="cd01803">
    <property type="entry name" value="Ubl_ubiquitin"/>
    <property type="match status" value="2"/>
</dbReference>
<dbReference type="FunFam" id="3.10.20.90:FF:000158">
    <property type="entry name" value="Polyubiquitin 5"/>
    <property type="match status" value="2"/>
</dbReference>
<dbReference type="Gene3D" id="3.10.20.90">
    <property type="entry name" value="Phosphatidylinositol 3-kinase Catalytic Subunit, Chain A, domain 1"/>
    <property type="match status" value="2"/>
</dbReference>
<dbReference type="InterPro" id="IPR000626">
    <property type="entry name" value="Ubiquitin-like_dom"/>
</dbReference>
<dbReference type="InterPro" id="IPR029071">
    <property type="entry name" value="Ubiquitin-like_domsf"/>
</dbReference>
<dbReference type="InterPro" id="IPR019954">
    <property type="entry name" value="Ubiquitin_CS"/>
</dbReference>
<dbReference type="InterPro" id="IPR019956">
    <property type="entry name" value="Ubiquitin_dom"/>
</dbReference>
<dbReference type="InterPro" id="IPR050158">
    <property type="entry name" value="Ubiquitin_ubiquitin-like"/>
</dbReference>
<dbReference type="PANTHER" id="PTHR10666">
    <property type="entry name" value="UBIQUITIN"/>
    <property type="match status" value="1"/>
</dbReference>
<dbReference type="Pfam" id="PF00240">
    <property type="entry name" value="ubiquitin"/>
    <property type="match status" value="2"/>
</dbReference>
<dbReference type="PRINTS" id="PR00348">
    <property type="entry name" value="UBIQUITIN"/>
</dbReference>
<dbReference type="SMART" id="SM00213">
    <property type="entry name" value="UBQ"/>
    <property type="match status" value="2"/>
</dbReference>
<dbReference type="SUPFAM" id="SSF54236">
    <property type="entry name" value="Ubiquitin-like"/>
    <property type="match status" value="2"/>
</dbReference>
<dbReference type="PROSITE" id="PS00299">
    <property type="entry name" value="UBIQUITIN_1"/>
    <property type="match status" value="2"/>
</dbReference>
<dbReference type="PROSITE" id="PS50053">
    <property type="entry name" value="UBIQUITIN_2"/>
    <property type="match status" value="2"/>
</dbReference>
<accession>P62972</accession>
<accession>P02248</accession>
<accession>P02249</accession>
<accession>P02250</accession>
<accession>Q29120</accession>
<accession>Q91887</accession>
<accession>Q91888</accession>
<sequence>QKESTLHLVLRLRGGMQIFVKTLTGKTITLEVEPSDTIENVKAKIQDKEGIPPDQQRLIFAGKQLEDGRTLSDYNIQKESTLHLVLRLRGGMQIFVKTLTGKTITLEVEPSDTIENVKAKIQDKEGIPPDQQRLIFAGKQLEDGRTLSDYNIQKESTLHLVLRLRGG</sequence>
<name>UBIQP_XENLA</name>
<proteinExistence type="evidence at protein level"/>
<keyword id="KW-0002">3D-structure</keyword>
<keyword id="KW-0963">Cytoplasm</keyword>
<keyword id="KW-1017">Isopeptide bond</keyword>
<keyword id="KW-0539">Nucleus</keyword>
<keyword id="KW-1185">Reference proteome</keyword>
<keyword id="KW-0677">Repeat</keyword>
<keyword id="KW-0832">Ubl conjugation</keyword>
<comment type="function">
    <text evidence="1">Ubiquitin Exists either covalently attached to another protein, or free (unanchored). When covalently bound, it is conjugated to target proteins via an isopeptide bond either as a monomer (monoubiquitin), a polymer linked via different Lys residues of the ubiquitin (polyubiquitin chains) or a linear polymer linked via the initiator Met of the ubiquitin (linear polyubiquitin chains). Polyubiquitin chains, when attached to a target protein, have different functions depending on the Lys residue of the ubiquitin that is linked: Lys-6-linked may be involved in DNA repair; Lys-11-linked is involved in ERAD (endoplasmic reticulum-associated degradation) and in cell-cycle regulation; Lys-29-linked is involved in proteotoxic stress response and cell cycle; Lys-33-linked is involved in kinase modification; Lys-48-linked is involved in protein degradation via the proteasome; Lys-63-linked is involved in endocytosis, DNA-damage responses as well as in signaling processes leading to activation of the transcription factor NF-kappa-B. Linear polymer chains formed via attachment by the initiator Met lead to cell signaling. Ubiquitin is usually conjugated to Lys residues of target proteins, however, in rare cases, conjugation to Cys or Ser residues has been observed. When polyubiquitin is free (unanchored-polyubiquitin), it also has distinct roles, such as in activation of protein kinases, and in signaling (By similarity).</text>
</comment>
<comment type="interaction">
    <interactant intactId="EBI-412964">
        <id>P62972</id>
    </interactant>
    <interactant intactId="EBI-15677370">
        <id>Q6P704</id>
        <label>ufd1.S</label>
    </interactant>
    <organismsDiffer>false</organismsDiffer>
    <experiments>2</experiments>
</comment>
<comment type="interaction">
    <interactant intactId="EBI-412964">
        <id>P62972</id>
    </interactant>
    <interactant intactId="EBI-745269">
        <id>Q9NPC3</id>
        <label>CCNB1IP1</label>
    </interactant>
    <organismsDiffer>true</organismsDiffer>
    <experiments>2</experiments>
</comment>
<comment type="subcellular location">
    <subcellularLocation>
        <location evidence="1">Cytoplasm</location>
    </subcellularLocation>
    <subcellularLocation>
        <location evidence="1">Nucleus</location>
    </subcellularLocation>
</comment>
<comment type="miscellaneous">
    <text>Ubiquitin is synthesized as a polyubiquitin precursor with exact head to tail repeats, the number of repeats differ between species (up to 12 in Xenopus). In some species there is a final amino-acid after the last repeat. Some ubiquitin genes contain a single copy of ubiquitin fused to a ribosomal protein (either eL40 or eS31).</text>
</comment>
<comment type="miscellaneous">
    <text>For the sake of clarity sequence features are annotated only for the first chain, and are not repeated for each of the following chains.</text>
</comment>
<comment type="similarity">
    <text evidence="4">Belongs to the ubiquitin family.</text>
</comment>
<feature type="chain" id="PRO_0000114811" description="Ubiquitin">
    <location>
        <begin position="1" status="less than"/>
        <end position="15"/>
    </location>
</feature>
<feature type="chain" id="PRO_0000396250" description="Ubiquitin">
    <location>
        <begin position="16"/>
        <end position="91"/>
    </location>
</feature>
<feature type="chain" id="PRO_0000396251" description="Ubiquitin">
    <location>
        <begin position="92"/>
        <end position="167"/>
    </location>
</feature>
<feature type="domain" description="Ubiquitin-like 1" evidence="3">
    <location>
        <begin position="1" status="less than"/>
        <end position="15"/>
    </location>
</feature>
<feature type="domain" description="Ubiquitin-like 2" evidence="3">
    <location>
        <begin position="16"/>
        <end position="91"/>
    </location>
</feature>
<feature type="domain" description="Ubiquitin-like 3" evidence="3">
    <location>
        <begin position="92"/>
        <end position="167"/>
    </location>
</feature>
<feature type="site" description="Interacts with activating enzyme">
    <location>
        <position position="69"/>
    </location>
</feature>
<feature type="site" description="Essential for function">
    <location>
        <position position="83"/>
    </location>
</feature>
<feature type="site" description="Interacts with activating enzyme">
    <location>
        <position position="87"/>
    </location>
</feature>
<feature type="cross-link" description="Glycyl lysine isopeptide (Lys-Gly) (interchain with G-Cter in ubiquitin)" evidence="2">
    <location>
        <position position="21"/>
    </location>
</feature>
<feature type="cross-link" description="Glycyl lysine isopeptide (Lys-Gly) (interchain with G-Cter in ubiquitin)" evidence="2">
    <location>
        <position position="26"/>
    </location>
</feature>
<feature type="cross-link" description="Glycyl lysine isopeptide (Lys-Gly) (interchain with G-Cter in ubiquitin)" evidence="2">
    <location>
        <position position="42"/>
    </location>
</feature>
<feature type="cross-link" description="Glycyl lysine isopeptide (Lys-Gly) (interchain with G-Cter in ubiquitin)" evidence="2">
    <location>
        <position position="44"/>
    </location>
</feature>
<feature type="cross-link" description="Glycyl lysine isopeptide (Lys-Gly) (interchain with G-Cter in ubiquitin)" evidence="2">
    <location>
        <position position="48"/>
    </location>
</feature>
<feature type="cross-link" description="Glycyl lysine isopeptide (Lys-Gly) (interchain with G-Cter in ubiquitin)" evidence="2">
    <location>
        <position position="63"/>
    </location>
</feature>
<feature type="cross-link" description="Glycyl lysine isopeptide (Lys-Gly) (interchain with G-Cter in ubiquitin)" evidence="2">
    <location>
        <position position="78"/>
    </location>
</feature>
<feature type="cross-link" description="Glycyl lysine isopeptide (Gly-Lys) (interchain with K-? in acceptor proteins)" evidence="3">
    <location>
        <position position="91"/>
    </location>
</feature>
<feature type="non-terminal residue">
    <location>
        <position position="1"/>
    </location>
</feature>
<feature type="strand" evidence="5">
    <location>
        <begin position="93"/>
        <end position="98"/>
    </location>
</feature>
<feature type="strand" evidence="5">
    <location>
        <begin position="103"/>
        <end position="107"/>
    </location>
</feature>
<feature type="helix" evidence="5">
    <location>
        <begin position="114"/>
        <end position="124"/>
    </location>
</feature>
<feature type="turn" evidence="5">
    <location>
        <begin position="129"/>
        <end position="131"/>
    </location>
</feature>
<feature type="strand" evidence="5">
    <location>
        <begin position="132"/>
        <end position="136"/>
    </location>
</feature>
<feature type="turn" evidence="5">
    <location>
        <begin position="147"/>
        <end position="151"/>
    </location>
</feature>
<feature type="strand" evidence="5">
    <location>
        <begin position="157"/>
        <end position="163"/>
    </location>
</feature>
<evidence type="ECO:0000250" key="1"/>
<evidence type="ECO:0000250" key="2">
    <source>
        <dbReference type="UniProtKB" id="P0CG47"/>
    </source>
</evidence>
<evidence type="ECO:0000255" key="3">
    <source>
        <dbReference type="PROSITE-ProRule" id="PRU00214"/>
    </source>
</evidence>
<evidence type="ECO:0000305" key="4"/>
<evidence type="ECO:0007829" key="5">
    <source>
        <dbReference type="PDB" id="2K39"/>
    </source>
</evidence>
<protein>
    <recommendedName>
        <fullName>Polyubiquitin</fullName>
    </recommendedName>
    <component>
        <recommendedName>
            <fullName>Ubiquitin</fullName>
        </recommendedName>
    </component>
</protein>
<organism>
    <name type="scientific">Xenopus laevis</name>
    <name type="common">African clawed frog</name>
    <dbReference type="NCBI Taxonomy" id="8355"/>
    <lineage>
        <taxon>Eukaryota</taxon>
        <taxon>Metazoa</taxon>
        <taxon>Chordata</taxon>
        <taxon>Craniata</taxon>
        <taxon>Vertebrata</taxon>
        <taxon>Euteleostomi</taxon>
        <taxon>Amphibia</taxon>
        <taxon>Batrachia</taxon>
        <taxon>Anura</taxon>
        <taxon>Pipoidea</taxon>
        <taxon>Pipidae</taxon>
        <taxon>Xenopodinae</taxon>
        <taxon>Xenopus</taxon>
        <taxon>Xenopus</taxon>
    </lineage>
</organism>